<reference key="1">
    <citation type="journal article" date="2002" name="Nature">
        <title>The genome sequence of Schizosaccharomyces pombe.</title>
        <authorList>
            <person name="Wood V."/>
            <person name="Gwilliam R."/>
            <person name="Rajandream M.A."/>
            <person name="Lyne M.H."/>
            <person name="Lyne R."/>
            <person name="Stewart A."/>
            <person name="Sgouros J.G."/>
            <person name="Peat N."/>
            <person name="Hayles J."/>
            <person name="Baker S.G."/>
            <person name="Basham D."/>
            <person name="Bowman S."/>
            <person name="Brooks K."/>
            <person name="Brown D."/>
            <person name="Brown S."/>
            <person name="Chillingworth T."/>
            <person name="Churcher C.M."/>
            <person name="Collins M."/>
            <person name="Connor R."/>
            <person name="Cronin A."/>
            <person name="Davis P."/>
            <person name="Feltwell T."/>
            <person name="Fraser A."/>
            <person name="Gentles S."/>
            <person name="Goble A."/>
            <person name="Hamlin N."/>
            <person name="Harris D.E."/>
            <person name="Hidalgo J."/>
            <person name="Hodgson G."/>
            <person name="Holroyd S."/>
            <person name="Hornsby T."/>
            <person name="Howarth S."/>
            <person name="Huckle E.J."/>
            <person name="Hunt S."/>
            <person name="Jagels K."/>
            <person name="James K.D."/>
            <person name="Jones L."/>
            <person name="Jones M."/>
            <person name="Leather S."/>
            <person name="McDonald S."/>
            <person name="McLean J."/>
            <person name="Mooney P."/>
            <person name="Moule S."/>
            <person name="Mungall K.L."/>
            <person name="Murphy L.D."/>
            <person name="Niblett D."/>
            <person name="Odell C."/>
            <person name="Oliver K."/>
            <person name="O'Neil S."/>
            <person name="Pearson D."/>
            <person name="Quail M.A."/>
            <person name="Rabbinowitsch E."/>
            <person name="Rutherford K.M."/>
            <person name="Rutter S."/>
            <person name="Saunders D."/>
            <person name="Seeger K."/>
            <person name="Sharp S."/>
            <person name="Skelton J."/>
            <person name="Simmonds M.N."/>
            <person name="Squares R."/>
            <person name="Squares S."/>
            <person name="Stevens K."/>
            <person name="Taylor K."/>
            <person name="Taylor R.G."/>
            <person name="Tivey A."/>
            <person name="Walsh S.V."/>
            <person name="Warren T."/>
            <person name="Whitehead S."/>
            <person name="Woodward J.R."/>
            <person name="Volckaert G."/>
            <person name="Aert R."/>
            <person name="Robben J."/>
            <person name="Grymonprez B."/>
            <person name="Weltjens I."/>
            <person name="Vanstreels E."/>
            <person name="Rieger M."/>
            <person name="Schaefer M."/>
            <person name="Mueller-Auer S."/>
            <person name="Gabel C."/>
            <person name="Fuchs M."/>
            <person name="Duesterhoeft A."/>
            <person name="Fritzc C."/>
            <person name="Holzer E."/>
            <person name="Moestl D."/>
            <person name="Hilbert H."/>
            <person name="Borzym K."/>
            <person name="Langer I."/>
            <person name="Beck A."/>
            <person name="Lehrach H."/>
            <person name="Reinhardt R."/>
            <person name="Pohl T.M."/>
            <person name="Eger P."/>
            <person name="Zimmermann W."/>
            <person name="Wedler H."/>
            <person name="Wambutt R."/>
            <person name="Purnelle B."/>
            <person name="Goffeau A."/>
            <person name="Cadieu E."/>
            <person name="Dreano S."/>
            <person name="Gloux S."/>
            <person name="Lelaure V."/>
            <person name="Mottier S."/>
            <person name="Galibert F."/>
            <person name="Aves S.J."/>
            <person name="Xiang Z."/>
            <person name="Hunt C."/>
            <person name="Moore K."/>
            <person name="Hurst S.M."/>
            <person name="Lucas M."/>
            <person name="Rochet M."/>
            <person name="Gaillardin C."/>
            <person name="Tallada V.A."/>
            <person name="Garzon A."/>
            <person name="Thode G."/>
            <person name="Daga R.R."/>
            <person name="Cruzado L."/>
            <person name="Jimenez J."/>
            <person name="Sanchez M."/>
            <person name="del Rey F."/>
            <person name="Benito J."/>
            <person name="Dominguez A."/>
            <person name="Revuelta J.L."/>
            <person name="Moreno S."/>
            <person name="Armstrong J."/>
            <person name="Forsburg S.L."/>
            <person name="Cerutti L."/>
            <person name="Lowe T."/>
            <person name="McCombie W.R."/>
            <person name="Paulsen I."/>
            <person name="Potashkin J."/>
            <person name="Shpakovski G.V."/>
            <person name="Ussery D."/>
            <person name="Barrell B.G."/>
            <person name="Nurse P."/>
        </authorList>
    </citation>
    <scope>NUCLEOTIDE SEQUENCE [LARGE SCALE GENOMIC DNA]</scope>
    <source>
        <strain>972 / ATCC 24843</strain>
    </source>
</reference>
<reference key="2">
    <citation type="journal article" date="2011" name="Science">
        <title>Comparative functional genomics of the fission yeasts.</title>
        <authorList>
            <person name="Rhind N."/>
            <person name="Chen Z."/>
            <person name="Yassour M."/>
            <person name="Thompson D.A."/>
            <person name="Haas B.J."/>
            <person name="Habib N."/>
            <person name="Wapinski I."/>
            <person name="Roy S."/>
            <person name="Lin M.F."/>
            <person name="Heiman D.I."/>
            <person name="Young S.K."/>
            <person name="Furuya K."/>
            <person name="Guo Y."/>
            <person name="Pidoux A."/>
            <person name="Chen H.M."/>
            <person name="Robbertse B."/>
            <person name="Goldberg J.M."/>
            <person name="Aoki K."/>
            <person name="Bayne E.H."/>
            <person name="Berlin A.M."/>
            <person name="Desjardins C.A."/>
            <person name="Dobbs E."/>
            <person name="Dukaj L."/>
            <person name="Fan L."/>
            <person name="FitzGerald M.G."/>
            <person name="French C."/>
            <person name="Gujja S."/>
            <person name="Hansen K."/>
            <person name="Keifenheim D."/>
            <person name="Levin J.Z."/>
            <person name="Mosher R.A."/>
            <person name="Mueller C.A."/>
            <person name="Pfiffner J."/>
            <person name="Priest M."/>
            <person name="Russ C."/>
            <person name="Smialowska A."/>
            <person name="Swoboda P."/>
            <person name="Sykes S.M."/>
            <person name="Vaughn M."/>
            <person name="Vengrova S."/>
            <person name="Yoder R."/>
            <person name="Zeng Q."/>
            <person name="Allshire R."/>
            <person name="Baulcombe D."/>
            <person name="Birren B.W."/>
            <person name="Brown W."/>
            <person name="Ekwall K."/>
            <person name="Kellis M."/>
            <person name="Leatherwood J."/>
            <person name="Levin H."/>
            <person name="Margalit H."/>
            <person name="Martienssen R."/>
            <person name="Nieduszynski C.A."/>
            <person name="Spatafora J.W."/>
            <person name="Friedman N."/>
            <person name="Dalgaard J.Z."/>
            <person name="Baumann P."/>
            <person name="Niki H."/>
            <person name="Regev A."/>
            <person name="Nusbaum C."/>
        </authorList>
    </citation>
    <scope>REVISION OF GENE MODEL</scope>
</reference>
<reference key="3">
    <citation type="journal article" date="1997" name="DNA Res.">
        <title>Identification of open reading frames in Schizosaccharomyces pombe cDNAs.</title>
        <authorList>
            <person name="Yoshioka S."/>
            <person name="Kato K."/>
            <person name="Nakai K."/>
            <person name="Okayama H."/>
            <person name="Nojima H."/>
        </authorList>
    </citation>
    <scope>NUCLEOTIDE SEQUENCE [LARGE SCALE MRNA] OF 1043-1478</scope>
    <source>
        <strain>PR745</strain>
    </source>
</reference>
<reference key="4">
    <citation type="journal article" date="2006" name="Microbiology">
        <title>A survey of all 11 ABC transporters in fission yeast: two novel ABC transporters are required for red pigment accumulation in a Schizosaccharomyces pombe adenine biosynthetic mutant.</title>
        <authorList>
            <person name="Iwaki T."/>
            <person name="Giga-Hama Y."/>
            <person name="Takegawa K."/>
        </authorList>
    </citation>
    <scope>FUNCTION</scope>
    <scope>SUBCELLULAR LOCATION</scope>
    <scope>DISRUPTION PHENOTYPE</scope>
</reference>
<reference key="5">
    <citation type="journal article" date="2008" name="J. Proteome Res.">
        <title>Phosphoproteome analysis of fission yeast.</title>
        <authorList>
            <person name="Wilson-Grady J.T."/>
            <person name="Villen J."/>
            <person name="Gygi S.P."/>
        </authorList>
    </citation>
    <scope>PHOSPHORYLATION [LARGE SCALE ANALYSIS] AT SER-839; SER-843 AND SER-863</scope>
    <scope>IDENTIFICATION BY MASS SPECTROMETRY</scope>
</reference>
<accession>Q10185</accession>
<accession>P78928</accession>
<proteinExistence type="evidence at protein level"/>
<organism>
    <name type="scientific">Schizosaccharomyces pombe (strain 972 / ATCC 24843)</name>
    <name type="common">Fission yeast</name>
    <dbReference type="NCBI Taxonomy" id="284812"/>
    <lineage>
        <taxon>Eukaryota</taxon>
        <taxon>Fungi</taxon>
        <taxon>Dikarya</taxon>
        <taxon>Ascomycota</taxon>
        <taxon>Taphrinomycotina</taxon>
        <taxon>Schizosaccharomycetes</taxon>
        <taxon>Schizosaccharomycetales</taxon>
        <taxon>Schizosaccharomycetaceae</taxon>
        <taxon>Schizosaccharomyces</taxon>
    </lineage>
</organism>
<evidence type="ECO:0000250" key="1"/>
<evidence type="ECO:0000255" key="2"/>
<evidence type="ECO:0000255" key="3">
    <source>
        <dbReference type="PROSITE-ProRule" id="PRU00434"/>
    </source>
</evidence>
<evidence type="ECO:0000255" key="4">
    <source>
        <dbReference type="PROSITE-ProRule" id="PRU00441"/>
    </source>
</evidence>
<evidence type="ECO:0000256" key="5">
    <source>
        <dbReference type="SAM" id="MobiDB-lite"/>
    </source>
</evidence>
<evidence type="ECO:0000269" key="6">
    <source>
    </source>
</evidence>
<evidence type="ECO:0000269" key="7">
    <source>
    </source>
</evidence>
<evidence type="ECO:0000305" key="8"/>
<dbReference type="EC" id="7.-.-.-"/>
<dbReference type="EMBL" id="CU329670">
    <property type="protein sequence ID" value="CAA93309.3"/>
    <property type="molecule type" value="Genomic_DNA"/>
</dbReference>
<dbReference type="EMBL" id="D89231">
    <property type="protein sequence ID" value="BAA13892.1"/>
    <property type="molecule type" value="mRNA"/>
</dbReference>
<dbReference type="PIR" id="T38712">
    <property type="entry name" value="T38712"/>
</dbReference>
<dbReference type="RefSeq" id="NP_593943.3">
    <property type="nucleotide sequence ID" value="NM_001019371.3"/>
</dbReference>
<dbReference type="SMR" id="Q10185"/>
<dbReference type="BioGRID" id="279622">
    <property type="interactions" value="21"/>
</dbReference>
<dbReference type="FunCoup" id="Q10185">
    <property type="interactions" value="144"/>
</dbReference>
<dbReference type="STRING" id="284812.Q10185"/>
<dbReference type="TCDB" id="3.A.1.208.16">
    <property type="family name" value="the atp-binding cassette (abc) superfamily"/>
</dbReference>
<dbReference type="GlyCosmos" id="Q10185">
    <property type="glycosylation" value="2 sites, No reported glycans"/>
</dbReference>
<dbReference type="iPTMnet" id="Q10185"/>
<dbReference type="PaxDb" id="4896-SPAC3F10.11c.1"/>
<dbReference type="EnsemblFungi" id="SPAC3F10.11c.1">
    <property type="protein sequence ID" value="SPAC3F10.11c.1:pep"/>
    <property type="gene ID" value="SPAC3F10.11c"/>
</dbReference>
<dbReference type="GeneID" id="2543193"/>
<dbReference type="KEGG" id="spo:2543193"/>
<dbReference type="PomBase" id="SPAC3F10.11c">
    <property type="gene designation" value="abc2"/>
</dbReference>
<dbReference type="VEuPathDB" id="FungiDB:SPAC3F10.11c"/>
<dbReference type="eggNOG" id="KOG0054">
    <property type="taxonomic scope" value="Eukaryota"/>
</dbReference>
<dbReference type="HOGENOM" id="CLU_000604_27_3_1"/>
<dbReference type="InParanoid" id="Q10185"/>
<dbReference type="OMA" id="CFETGMR"/>
<dbReference type="PhylomeDB" id="Q10185"/>
<dbReference type="Reactome" id="R-SPO-159418">
    <property type="pathway name" value="Recycling of bile acids and salts"/>
</dbReference>
<dbReference type="Reactome" id="R-SPO-1660661">
    <property type="pathway name" value="Sphingolipid de novo biosynthesis"/>
</dbReference>
<dbReference type="Reactome" id="R-SPO-189483">
    <property type="pathway name" value="Heme degradation"/>
</dbReference>
<dbReference type="Reactome" id="R-SPO-2142691">
    <property type="pathway name" value="Synthesis of Leukotrienes (LT) and Eoxins (EX)"/>
</dbReference>
<dbReference type="Reactome" id="R-SPO-382556">
    <property type="pathway name" value="ABC-family proteins mediated transport"/>
</dbReference>
<dbReference type="Reactome" id="R-SPO-9707564">
    <property type="pathway name" value="Cytoprotection by HMOX1"/>
</dbReference>
<dbReference type="Reactome" id="R-SPO-9749641">
    <property type="pathway name" value="Aspirin ADME"/>
</dbReference>
<dbReference type="Reactome" id="R-SPO-9753281">
    <property type="pathway name" value="Paracetamol ADME"/>
</dbReference>
<dbReference type="Reactome" id="R-SPO-9754706">
    <property type="pathway name" value="Atorvastatin ADME"/>
</dbReference>
<dbReference type="Reactome" id="R-SPO-9758890">
    <property type="pathway name" value="Transport of RCbl within the body"/>
</dbReference>
<dbReference type="PRO" id="PR:Q10185"/>
<dbReference type="Proteomes" id="UP000002485">
    <property type="component" value="Chromosome I"/>
</dbReference>
<dbReference type="GO" id="GO:0000324">
    <property type="term" value="C:fungal-type vacuole"/>
    <property type="evidence" value="ECO:0000314"/>
    <property type="project" value="PomBase"/>
</dbReference>
<dbReference type="GO" id="GO:0000329">
    <property type="term" value="C:fungal-type vacuole membrane"/>
    <property type="evidence" value="ECO:0000314"/>
    <property type="project" value="PomBase"/>
</dbReference>
<dbReference type="GO" id="GO:0005794">
    <property type="term" value="C:Golgi apparatus"/>
    <property type="evidence" value="ECO:0007005"/>
    <property type="project" value="PomBase"/>
</dbReference>
<dbReference type="GO" id="GO:0016020">
    <property type="term" value="C:membrane"/>
    <property type="evidence" value="ECO:0000318"/>
    <property type="project" value="GO_Central"/>
</dbReference>
<dbReference type="GO" id="GO:0044604">
    <property type="term" value="F:ABC-type phytochelatin transporter activity"/>
    <property type="evidence" value="ECO:0000315"/>
    <property type="project" value="PomBase"/>
</dbReference>
<dbReference type="GO" id="GO:0005524">
    <property type="term" value="F:ATP binding"/>
    <property type="evidence" value="ECO:0007669"/>
    <property type="project" value="UniProtKB-KW"/>
</dbReference>
<dbReference type="GO" id="GO:0016887">
    <property type="term" value="F:ATP hydrolysis activity"/>
    <property type="evidence" value="ECO:0007669"/>
    <property type="project" value="InterPro"/>
</dbReference>
<dbReference type="GO" id="GO:0042626">
    <property type="term" value="F:ATPase-coupled transmembrane transporter activity"/>
    <property type="evidence" value="ECO:0000318"/>
    <property type="project" value="GO_Central"/>
</dbReference>
<dbReference type="GO" id="GO:0098849">
    <property type="term" value="P:cellular detoxification of cadmium ion"/>
    <property type="evidence" value="ECO:0000315"/>
    <property type="project" value="PomBase"/>
</dbReference>
<dbReference type="GO" id="GO:0071996">
    <property type="term" value="P:glutathione transmembrane import into vacuole"/>
    <property type="evidence" value="ECO:0000315"/>
    <property type="project" value="PomBase"/>
</dbReference>
<dbReference type="GO" id="GO:0036246">
    <property type="term" value="P:phytochelatin 2 import into vacuole"/>
    <property type="evidence" value="ECO:0000315"/>
    <property type="project" value="PomBase"/>
</dbReference>
<dbReference type="GO" id="GO:0055085">
    <property type="term" value="P:transmembrane transport"/>
    <property type="evidence" value="ECO:0000318"/>
    <property type="project" value="GO_Central"/>
</dbReference>
<dbReference type="CDD" id="cd18595">
    <property type="entry name" value="ABC_6TM_MRP1_2_3_6_D1_like"/>
    <property type="match status" value="1"/>
</dbReference>
<dbReference type="CDD" id="cd18603">
    <property type="entry name" value="ABC_6TM_MRP1_2_3_6_D2_like"/>
    <property type="match status" value="1"/>
</dbReference>
<dbReference type="CDD" id="cd03250">
    <property type="entry name" value="ABCC_MRP_domain1"/>
    <property type="match status" value="1"/>
</dbReference>
<dbReference type="CDD" id="cd03244">
    <property type="entry name" value="ABCC_MRP_domain2"/>
    <property type="match status" value="1"/>
</dbReference>
<dbReference type="FunFam" id="3.40.50.300:FF:000565">
    <property type="entry name" value="ABC bile acid transporter"/>
    <property type="match status" value="1"/>
</dbReference>
<dbReference type="FunFam" id="3.40.50.300:FF:002123">
    <property type="entry name" value="ATP-binding cassette bilirubin transporter"/>
    <property type="match status" value="1"/>
</dbReference>
<dbReference type="FunFam" id="1.20.1560.10:FF:000001">
    <property type="entry name" value="ATP-binding cassette subfamily C member 1"/>
    <property type="match status" value="1"/>
</dbReference>
<dbReference type="FunFam" id="1.20.1560.10:FF:000078">
    <property type="entry name" value="Unplaced genomic scaffold supercont1.1, whole genome shotgun sequence"/>
    <property type="match status" value="1"/>
</dbReference>
<dbReference type="Gene3D" id="1.20.1560.10">
    <property type="entry name" value="ABC transporter type 1, transmembrane domain"/>
    <property type="match status" value="2"/>
</dbReference>
<dbReference type="Gene3D" id="3.40.50.300">
    <property type="entry name" value="P-loop containing nucleotide triphosphate hydrolases"/>
    <property type="match status" value="2"/>
</dbReference>
<dbReference type="InterPro" id="IPR003593">
    <property type="entry name" value="AAA+_ATPase"/>
</dbReference>
<dbReference type="InterPro" id="IPR011527">
    <property type="entry name" value="ABC1_TM_dom"/>
</dbReference>
<dbReference type="InterPro" id="IPR036640">
    <property type="entry name" value="ABC1_TM_sf"/>
</dbReference>
<dbReference type="InterPro" id="IPR003439">
    <property type="entry name" value="ABC_transporter-like_ATP-bd"/>
</dbReference>
<dbReference type="InterPro" id="IPR017871">
    <property type="entry name" value="ABC_transporter-like_CS"/>
</dbReference>
<dbReference type="InterPro" id="IPR050173">
    <property type="entry name" value="ABC_transporter_C-like"/>
</dbReference>
<dbReference type="InterPro" id="IPR027417">
    <property type="entry name" value="P-loop_NTPase"/>
</dbReference>
<dbReference type="InterPro" id="IPR056227">
    <property type="entry name" value="TMD0_ABC"/>
</dbReference>
<dbReference type="PANTHER" id="PTHR24223">
    <property type="entry name" value="ATP-BINDING CASSETTE SUB-FAMILY C"/>
    <property type="match status" value="1"/>
</dbReference>
<dbReference type="PANTHER" id="PTHR24223:SF443">
    <property type="entry name" value="MULTIDRUG-RESISTANCE LIKE PROTEIN 1, ISOFORM I"/>
    <property type="match status" value="1"/>
</dbReference>
<dbReference type="Pfam" id="PF00664">
    <property type="entry name" value="ABC_membrane"/>
    <property type="match status" value="2"/>
</dbReference>
<dbReference type="Pfam" id="PF00005">
    <property type="entry name" value="ABC_tran"/>
    <property type="match status" value="2"/>
</dbReference>
<dbReference type="Pfam" id="PF24357">
    <property type="entry name" value="TMD0_ABC"/>
    <property type="match status" value="1"/>
</dbReference>
<dbReference type="SMART" id="SM00382">
    <property type="entry name" value="AAA"/>
    <property type="match status" value="2"/>
</dbReference>
<dbReference type="SUPFAM" id="SSF90123">
    <property type="entry name" value="ABC transporter transmembrane region"/>
    <property type="match status" value="2"/>
</dbReference>
<dbReference type="SUPFAM" id="SSF52540">
    <property type="entry name" value="P-loop containing nucleoside triphosphate hydrolases"/>
    <property type="match status" value="2"/>
</dbReference>
<dbReference type="PROSITE" id="PS50929">
    <property type="entry name" value="ABC_TM1F"/>
    <property type="match status" value="2"/>
</dbReference>
<dbReference type="PROSITE" id="PS00211">
    <property type="entry name" value="ABC_TRANSPORTER_1"/>
    <property type="match status" value="1"/>
</dbReference>
<dbReference type="PROSITE" id="PS50893">
    <property type="entry name" value="ABC_TRANSPORTER_2"/>
    <property type="match status" value="2"/>
</dbReference>
<comment type="function">
    <text evidence="6">Involved in vacuolar sequestration of glutathione S-conjugates. Together with abc4, required for accumulation of a red pigment (ade pigment) in the vacuole of a mutant affected in the adenine biosynthetic pathway.</text>
</comment>
<comment type="subcellular location">
    <subcellularLocation>
        <location evidence="8">Vacuole membrane</location>
        <topology evidence="4">Multi-pass membrane protein</topology>
    </subcellularLocation>
</comment>
<comment type="disruption phenotype">
    <text evidence="6">Cells lacking both abc2 and abc4 show sensitivity to cycloheximide (CHX) and 4-nitroquinoline oxide (4-NQO), and decreased accumulation of monochlorobimane-glutathione (MCIB-GS).</text>
</comment>
<comment type="similarity">
    <text evidence="8">Belongs to the ABC transporter superfamily. ABCC family. Conjugate transporter (TC 3.A.1.208) subfamily.</text>
</comment>
<name>ABC2_SCHPO</name>
<keyword id="KW-0067">ATP-binding</keyword>
<keyword id="KW-0216">Detoxification</keyword>
<keyword id="KW-0325">Glycoprotein</keyword>
<keyword id="KW-0472">Membrane</keyword>
<keyword id="KW-0547">Nucleotide-binding</keyword>
<keyword id="KW-0597">Phosphoprotein</keyword>
<keyword id="KW-1185">Reference proteome</keyword>
<keyword id="KW-0677">Repeat</keyword>
<keyword id="KW-1278">Translocase</keyword>
<keyword id="KW-0812">Transmembrane</keyword>
<keyword id="KW-1133">Transmembrane helix</keyword>
<keyword id="KW-0813">Transport</keyword>
<keyword id="KW-0926">Vacuole</keyword>
<protein>
    <recommendedName>
        <fullName>ATP-binding cassette transporter abc2</fullName>
        <shortName>ABC transporter abc2</shortName>
        <ecNumber>7.-.-.-</ecNumber>
    </recommendedName>
    <alternativeName>
        <fullName>ATP-energized glutathione S-conjugate pump abc2</fullName>
    </alternativeName>
    <alternativeName>
        <fullName>Glutathione S-conjugate-transporting ATPase abc2</fullName>
    </alternativeName>
</protein>
<sequence>MVLEQDLDPFVGGNWMNSAYKGFTFLSATWLAPNIYLLISGCLQYFYEVRKRSHYFHFRRFWTIWLKSLVIMVLLFTHIYDCYKTNESVWNVLSIITYFLALFLHVVEQPTLRIPMASLLMFWLFKFLASALVLLLRPNYTMFPMLNVVPSITFFCSLVCLLAEIYVPPANRVWYPDDAAELEETGLRPSRFTYANIFSRISFGWLSPLMKFGYRNYLTESDAWSLPPAERSSNLTIVFEKNWISHAKKKKSSLYMWGVLFLNHWKLTVVIIVLKLVQDVVAFIQPNLIRKIVIFVSSYSSEHPQPPQVGFSLAIAMFLTNVVQTALLQQYFQLGMVLGMRWRSELITAIYRKSLRLSSAARQSRSVGDIVNYMSVDTQKVCDLTMFLFVIVSGPFQIVLALTNLYHLVGYGALSGAFVTFLLFPCNVVIASIFKRFQNRQMKNKDARSQFMTEIINNIRSIKLYAWENIFLQKLLQLRNTRELRMLKKIGIVNTIGNFTWLFAPILVSAATFGTFIVLYGKTRVLSVDIVFACLSLFNLLQFPLTMLPIVVSSVLEASVAISRIYGFLTAGELDSNAVQRYPANKEPSGVCLEIKKGTFSWSGPGQNAAEPTLRDIDFVARRGELCCIVGKVGMGKSSLLEACLGNMQKHSGSVFRCGSIAYAAQQPWILNATIQENILFGLELDPEFYEKTIRACCLLRDFEILADGDQTEVGEKGISLSGGQKARISLARAVYSRSDIYLLDDILSAVDQHVNRDLVRNLLGSKGLLRSRCVILSTNSLTVLKEASMIYMLRNGKIIESGSFTQLSSSPDSQLFQLLSEFSKKDTASSTGADTPLSRSQSVITSSTDVTSSASRSSDTVSNYPKATIKGTGRIRKRLTDEDNVKATGQAAEKMERGKVKWKVYWTYFKACSLFLIFLYFLFIIGGIGMNVGTNVWLKHWSEVNTQLGYNPKPYFYLGIYTLFGLLSCALISLSSLTITVFCAIKSCRYLHDSMVKAVLRAPMSFFETTPTGRILNRFSSDVYRVDEVISRVFMFFFRNLFQIVFVLAVICYSSPMFMILIVPLFFLYRYNQVYYTQTSRELKRLDSVTRSPLYAHFQESLGGLSTIRAYDMEDTFISENDIRVDTNHRIWFLYFSSNRWQAIRVEAIGALVVFSSAFFGVLSAVRGNPNSGLVGLSLSYAVQITQSLTFVVRQSVDVETNIVSVERMLEYIGLPSEAPSIIPDHRPPEGWPSHGAIKFDHYSVRYRENLPLVLNDISVNIKPQEKIGIVGRTGAGKSTLTLALFRLIEPTSGDIQLDDINITSIGLHDLRSRLAIIPQENQAFEGTIRENLDPNANATDEEIWHALEAASLKQFIQTLDGGLYSRVTEGGANLSSGQRQLMCLTRALLTPTRVLLLDEATAAVDVETDAIVQRTIRERFNDRTILTIAHRINTVMDSNRILVLDHGKVVEFDSTKKLLENKASLFYSLAKESGLI</sequence>
<gene>
    <name type="primary">abc2</name>
    <name type="ORF">SPAC3F10.11c</name>
</gene>
<feature type="chain" id="PRO_0000093468" description="ATP-binding cassette transporter abc2">
    <location>
        <begin position="1"/>
        <end position="1478"/>
    </location>
</feature>
<feature type="topological domain" description="Vacuolar" evidence="1">
    <location>
        <begin position="1"/>
        <end position="25"/>
    </location>
</feature>
<feature type="transmembrane region" description="Helical; Name=1" evidence="4">
    <location>
        <begin position="26"/>
        <end position="46"/>
    </location>
</feature>
<feature type="topological domain" description="Cytoplasmic" evidence="1">
    <location>
        <begin position="47"/>
        <end position="65"/>
    </location>
</feature>
<feature type="transmembrane region" description="Helical; Name=2" evidence="4">
    <location>
        <begin position="66"/>
        <end position="85"/>
    </location>
</feature>
<feature type="topological domain" description="Vacuolar" evidence="1">
    <location>
        <begin position="86"/>
        <end position="90"/>
    </location>
</feature>
<feature type="transmembrane region" description="Helical; Name=3" evidence="4">
    <location>
        <begin position="91"/>
        <end position="104"/>
    </location>
</feature>
<feature type="topological domain" description="Cytoplasmic" evidence="1">
    <location>
        <begin position="105"/>
        <end position="116"/>
    </location>
</feature>
<feature type="transmembrane region" description="Helical; Name=4" evidence="4">
    <location>
        <begin position="117"/>
        <end position="137"/>
    </location>
</feature>
<feature type="topological domain" description="Vacuolar" evidence="1">
    <location>
        <begin position="138"/>
        <end position="154"/>
    </location>
</feature>
<feature type="transmembrane region" description="Helical; Name=5" evidence="4">
    <location>
        <begin position="155"/>
        <end position="175"/>
    </location>
</feature>
<feature type="topological domain" description="Cytoplasmic" evidence="1">
    <location>
        <begin position="176"/>
        <end position="259"/>
    </location>
</feature>
<feature type="transmembrane region" description="Helical; Name=6" evidence="4">
    <location>
        <begin position="260"/>
        <end position="280"/>
    </location>
</feature>
<feature type="topological domain" description="Vacuolar" evidence="1">
    <location>
        <begin position="281"/>
        <end position="310"/>
    </location>
</feature>
<feature type="transmembrane region" description="Helical; Name=7" evidence="4">
    <location>
        <begin position="311"/>
        <end position="331"/>
    </location>
</feature>
<feature type="topological domain" description="Cytoplasmic" evidence="1">
    <location>
        <begin position="332"/>
        <end position="387"/>
    </location>
</feature>
<feature type="transmembrane region" description="Helical; Name=8" evidence="4">
    <location>
        <begin position="388"/>
        <end position="408"/>
    </location>
</feature>
<feature type="topological domain" description="Vacuolar" evidence="1">
    <location>
        <begin position="409"/>
        <end position="411"/>
    </location>
</feature>
<feature type="transmembrane region" description="Helical; Name=9" evidence="4">
    <location>
        <begin position="412"/>
        <end position="432"/>
    </location>
</feature>
<feature type="topological domain" description="Cytoplasmic" evidence="1">
    <location>
        <begin position="433"/>
        <end position="495"/>
    </location>
</feature>
<feature type="transmembrane region" description="Helical; Name=10" evidence="4">
    <location>
        <begin position="496"/>
        <end position="516"/>
    </location>
</feature>
<feature type="topological domain" description="Vacuolar" evidence="1">
    <location>
        <begin position="517"/>
        <end position="539"/>
    </location>
</feature>
<feature type="transmembrane region" description="Helical; Name=11" evidence="4">
    <location>
        <begin position="540"/>
        <end position="560"/>
    </location>
</feature>
<feature type="topological domain" description="Cytoplasmic" evidence="1">
    <location>
        <begin position="561"/>
        <end position="910"/>
    </location>
</feature>
<feature type="transmembrane region" description="Helical; Name=12" evidence="4">
    <location>
        <begin position="911"/>
        <end position="931"/>
    </location>
</feature>
<feature type="topological domain" description="Vacuolar" evidence="1">
    <location>
        <begin position="932"/>
        <end position="968"/>
    </location>
</feature>
<feature type="transmembrane region" description="Helical; Name=13" evidence="4">
    <location>
        <begin position="969"/>
        <end position="990"/>
    </location>
</feature>
<feature type="topological domain" description="Cytoplasmic" evidence="1">
    <location>
        <begin position="991"/>
        <end position="1033"/>
    </location>
</feature>
<feature type="transmembrane region" description="Helical; Name=14" evidence="4">
    <location>
        <begin position="1034"/>
        <end position="1054"/>
    </location>
</feature>
<feature type="topological domain" description="Vacuolar" evidence="1">
    <location>
        <position position="1055"/>
    </location>
</feature>
<feature type="transmembrane region" description="Helical; Name=15" evidence="4">
    <location>
        <begin position="1056"/>
        <end position="1076"/>
    </location>
</feature>
<feature type="topological domain" description="Cytoplasmic" evidence="1">
    <location>
        <begin position="1077"/>
        <end position="1147"/>
    </location>
</feature>
<feature type="transmembrane region" description="Helical; Name=16" evidence="4">
    <location>
        <begin position="1148"/>
        <end position="1168"/>
    </location>
</feature>
<feature type="topological domain" description="Vacuolar" evidence="1">
    <location>
        <begin position="1169"/>
        <end position="1172"/>
    </location>
</feature>
<feature type="transmembrane region" description="Helical; Name=17" evidence="4">
    <location>
        <begin position="1173"/>
        <end position="1193"/>
    </location>
</feature>
<feature type="topological domain" description="Cytoplasmic" evidence="1">
    <location>
        <begin position="1194"/>
        <end position="1478"/>
    </location>
</feature>
<feature type="domain" description="ABC transmembrane type-1 1" evidence="4">
    <location>
        <begin position="268"/>
        <end position="557"/>
    </location>
</feature>
<feature type="domain" description="ABC transporter 1" evidence="3">
    <location>
        <begin position="593"/>
        <end position="821"/>
    </location>
</feature>
<feature type="domain" description="ABC transmembrane type-1 2" evidence="4">
    <location>
        <begin position="918"/>
        <end position="1202"/>
    </location>
</feature>
<feature type="domain" description="ABC transporter 2" evidence="3">
    <location>
        <begin position="1239"/>
        <end position="1473"/>
    </location>
</feature>
<feature type="region of interest" description="Disordered" evidence="5">
    <location>
        <begin position="828"/>
        <end position="867"/>
    </location>
</feature>
<feature type="compositionally biased region" description="Polar residues" evidence="5">
    <location>
        <begin position="829"/>
        <end position="840"/>
    </location>
</feature>
<feature type="compositionally biased region" description="Low complexity" evidence="5">
    <location>
        <begin position="841"/>
        <end position="863"/>
    </location>
</feature>
<feature type="binding site" evidence="3">
    <location>
        <begin position="631"/>
        <end position="638"/>
    </location>
    <ligand>
        <name>ATP</name>
        <dbReference type="ChEBI" id="CHEBI:30616"/>
        <label>1</label>
    </ligand>
</feature>
<feature type="binding site" evidence="3">
    <location>
        <begin position="1273"/>
        <end position="1280"/>
    </location>
    <ligand>
        <name>ATP</name>
        <dbReference type="ChEBI" id="CHEBI:30616"/>
        <label>2</label>
    </ligand>
</feature>
<feature type="modified residue" description="Phosphoserine" evidence="7">
    <location>
        <position position="839"/>
    </location>
</feature>
<feature type="modified residue" description="Phosphoserine" evidence="7">
    <location>
        <position position="843"/>
    </location>
</feature>
<feature type="modified residue" description="Phosphoserine" evidence="7">
    <location>
        <position position="863"/>
    </location>
</feature>
<feature type="glycosylation site" description="N-linked (GlcNAc...) asparagine" evidence="2">
    <location>
        <position position="86"/>
    </location>
</feature>
<feature type="glycosylation site" description="N-linked (GlcNAc...) asparagine" evidence="2">
    <location>
        <position position="139"/>
    </location>
</feature>
<feature type="sequence conflict" description="In Ref. 3; BAA13892." evidence="8" ref="3">
    <original>F</original>
    <variation>L</variation>
    <location>
        <position position="1287"/>
    </location>
</feature>
<feature type="sequence conflict" description="In Ref. 3; BAA13892." evidence="8" ref="3">
    <original>DIN</original>
    <variation>YIH</variation>
    <location>
        <begin position="1301"/>
        <end position="1303"/>
    </location>
</feature>
<feature type="sequence conflict" description="In Ref. 3; BAA13892." evidence="8" ref="3">
    <original>D</original>
    <variation>H</variation>
    <location>
        <position position="1311"/>
    </location>
</feature>
<feature type="sequence conflict" description="In Ref. 3; BAA13892." evidence="8" ref="3">
    <original>L</original>
    <variation>V</variation>
    <location>
        <position position="1467"/>
    </location>
</feature>